<name>RUTD_ECO27</name>
<proteinExistence type="inferred from homology"/>
<organism>
    <name type="scientific">Escherichia coli O127:H6 (strain E2348/69 / EPEC)</name>
    <dbReference type="NCBI Taxonomy" id="574521"/>
    <lineage>
        <taxon>Bacteria</taxon>
        <taxon>Pseudomonadati</taxon>
        <taxon>Pseudomonadota</taxon>
        <taxon>Gammaproteobacteria</taxon>
        <taxon>Enterobacterales</taxon>
        <taxon>Enterobacteriaceae</taxon>
        <taxon>Escherichia</taxon>
    </lineage>
</organism>
<keyword id="KW-0378">Hydrolase</keyword>
<keyword id="KW-1185">Reference proteome</keyword>
<sequence>MKLSLSPPPYADAPVVVLISGLGGSGSYWLPQLAVLDQEYQVVCYDQRGTGNNPDTLAEDYSIAQMAAELHQALVAAGIERYAVVGHALGALVGMQLALDYPASVTVLVSVNGWLRINAHTRRCFQVREQLLHSGGAQAWVEALPLFLYPADWMAARAPRLEAEDALALAHFQGKNNLLRRLNALKRADFSHHADRIRCPVQIICASDDLLVPTACSSELHAALPDSQKMVMRYGGHACNVTDPETFNALLLNGLASLLHHREAAL</sequence>
<comment type="function">
    <text evidence="1">Involved in pyrimidine catabolism. May facilitate the hydrolysis of carbamate, a reaction that can also occur spontaneously.</text>
</comment>
<comment type="catalytic activity">
    <reaction evidence="1">
        <text>carbamate + 2 H(+) = NH4(+) + CO2</text>
        <dbReference type="Rhea" id="RHEA:15649"/>
        <dbReference type="ChEBI" id="CHEBI:13941"/>
        <dbReference type="ChEBI" id="CHEBI:15378"/>
        <dbReference type="ChEBI" id="CHEBI:16526"/>
        <dbReference type="ChEBI" id="CHEBI:28938"/>
    </reaction>
</comment>
<comment type="similarity">
    <text evidence="1">Belongs to the AB hydrolase superfamily. Hydrolase RutD family.</text>
</comment>
<gene>
    <name evidence="1" type="primary">rutD</name>
    <name type="ordered locus">E2348C_1060</name>
</gene>
<dbReference type="EC" id="3.5.1.-" evidence="1"/>
<dbReference type="EMBL" id="FM180568">
    <property type="protein sequence ID" value="CAS08608.1"/>
    <property type="molecule type" value="Genomic_DNA"/>
</dbReference>
<dbReference type="RefSeq" id="WP_001340068.1">
    <property type="nucleotide sequence ID" value="NC_011601.1"/>
</dbReference>
<dbReference type="SMR" id="B7UNZ2"/>
<dbReference type="ESTHER" id="ecoli-rutD">
    <property type="family name" value="RutD"/>
</dbReference>
<dbReference type="KEGG" id="ecg:E2348C_1060"/>
<dbReference type="HOGENOM" id="CLU_020336_50_1_6"/>
<dbReference type="Proteomes" id="UP000008205">
    <property type="component" value="Chromosome"/>
</dbReference>
<dbReference type="GO" id="GO:0016020">
    <property type="term" value="C:membrane"/>
    <property type="evidence" value="ECO:0007669"/>
    <property type="project" value="TreeGrafter"/>
</dbReference>
<dbReference type="GO" id="GO:0016811">
    <property type="term" value="F:hydrolase activity, acting on carbon-nitrogen (but not peptide) bonds, in linear amides"/>
    <property type="evidence" value="ECO:0007669"/>
    <property type="project" value="InterPro"/>
</dbReference>
<dbReference type="GO" id="GO:0019740">
    <property type="term" value="P:nitrogen utilization"/>
    <property type="evidence" value="ECO:0007669"/>
    <property type="project" value="UniProtKB-UniRule"/>
</dbReference>
<dbReference type="GO" id="GO:0006212">
    <property type="term" value="P:uracil catabolic process"/>
    <property type="evidence" value="ECO:0007669"/>
    <property type="project" value="UniProtKB-UniRule"/>
</dbReference>
<dbReference type="FunFam" id="3.40.50.1820:FF:000052">
    <property type="entry name" value="Putative aminoacrylate hydrolase RutD"/>
    <property type="match status" value="1"/>
</dbReference>
<dbReference type="Gene3D" id="3.40.50.1820">
    <property type="entry name" value="alpha/beta hydrolase"/>
    <property type="match status" value="1"/>
</dbReference>
<dbReference type="HAMAP" id="MF_00832">
    <property type="entry name" value="RutD"/>
    <property type="match status" value="1"/>
</dbReference>
<dbReference type="InterPro" id="IPR000073">
    <property type="entry name" value="AB_hydrolase_1"/>
</dbReference>
<dbReference type="InterPro" id="IPR029058">
    <property type="entry name" value="AB_hydrolase_fold"/>
</dbReference>
<dbReference type="InterPro" id="IPR050266">
    <property type="entry name" value="AB_hydrolase_sf"/>
</dbReference>
<dbReference type="InterPro" id="IPR019913">
    <property type="entry name" value="Pyrimidine_utilisation_RutD"/>
</dbReference>
<dbReference type="NCBIfam" id="TIGR03611">
    <property type="entry name" value="RutD"/>
    <property type="match status" value="1"/>
</dbReference>
<dbReference type="PANTHER" id="PTHR43798:SF27">
    <property type="entry name" value="HYDROLASE ALPHA_BETA HYDROLASE FOLD FAMILY"/>
    <property type="match status" value="1"/>
</dbReference>
<dbReference type="PANTHER" id="PTHR43798">
    <property type="entry name" value="MONOACYLGLYCEROL LIPASE"/>
    <property type="match status" value="1"/>
</dbReference>
<dbReference type="Pfam" id="PF00561">
    <property type="entry name" value="Abhydrolase_1"/>
    <property type="match status" value="1"/>
</dbReference>
<dbReference type="PRINTS" id="PR00111">
    <property type="entry name" value="ABHYDROLASE"/>
</dbReference>
<dbReference type="SUPFAM" id="SSF53474">
    <property type="entry name" value="alpha/beta-Hydrolases"/>
    <property type="match status" value="1"/>
</dbReference>
<accession>B7UNZ2</accession>
<evidence type="ECO:0000255" key="1">
    <source>
        <dbReference type="HAMAP-Rule" id="MF_00832"/>
    </source>
</evidence>
<protein>
    <recommendedName>
        <fullName evidence="1">Putative carbamate hydrolase RutD</fullName>
        <ecNumber evidence="1">3.5.1.-</ecNumber>
    </recommendedName>
    <alternativeName>
        <fullName evidence="1">Aminohydrolase</fullName>
    </alternativeName>
</protein>
<feature type="chain" id="PRO_0000402949" description="Putative carbamate hydrolase RutD">
    <location>
        <begin position="1"/>
        <end position="266"/>
    </location>
</feature>
<reference key="1">
    <citation type="journal article" date="2009" name="J. Bacteriol.">
        <title>Complete genome sequence and comparative genome analysis of enteropathogenic Escherichia coli O127:H6 strain E2348/69.</title>
        <authorList>
            <person name="Iguchi A."/>
            <person name="Thomson N.R."/>
            <person name="Ogura Y."/>
            <person name="Saunders D."/>
            <person name="Ooka T."/>
            <person name="Henderson I.R."/>
            <person name="Harris D."/>
            <person name="Asadulghani M."/>
            <person name="Kurokawa K."/>
            <person name="Dean P."/>
            <person name="Kenny B."/>
            <person name="Quail M.A."/>
            <person name="Thurston S."/>
            <person name="Dougan G."/>
            <person name="Hayashi T."/>
            <person name="Parkhill J."/>
            <person name="Frankel G."/>
        </authorList>
    </citation>
    <scope>NUCLEOTIDE SEQUENCE [LARGE SCALE GENOMIC DNA]</scope>
    <source>
        <strain>E2348/69 / EPEC</strain>
    </source>
</reference>